<reference key="1">
    <citation type="journal article" date="2013" name="J. Biol. Chem.">
        <title>Sea anemone peptide with uncommon beta-hairpin structure inhibits acid-sensing ion channel 3 (ASIC3) and reveals analgesic activity.</title>
        <authorList>
            <person name="Osmakov D.I."/>
            <person name="Kozlov S.A."/>
            <person name="Andreev Y.A."/>
            <person name="Koshelev S.G."/>
            <person name="Sanamyan N.P."/>
            <person name="Sanamyan K.E."/>
            <person name="Dyachenko I.A."/>
            <person name="Bondarenko D.A."/>
            <person name="Murashev A.N."/>
            <person name="Mineev K.S."/>
            <person name="Arseniev A.S."/>
            <person name="Grishin E.V."/>
        </authorList>
    </citation>
    <scope>NUCLEOTIDE SEQUENCE [MRNA]</scope>
    <scope>PARTIAL PROTEIN SEQUENCE</scope>
    <scope>FUNCTION</scope>
    <scope>STRUCTURE BY NMR OF 132-160</scope>
    <scope>SUBCELLULAR LOCATION</scope>
    <scope>MASS SPECTROMETRY</scope>
    <source>
        <tissue>Nematoblast</tissue>
    </source>
</reference>
<sequence length="162" mass="17737">MERILLCFIVATLVAISMANPRPISIDPPCWTCYYRDSSGNCAFDAIACGGARKRVPKPISIDPPCRTCYYRDSSGNCVYDAFGCGGARKRVPKPISIDPPCRTCYYRDSSGNCVYDAFGCGGARKRVPKPISIDPPCRFCYHRDGSGNCVYDAYGCGAVRK</sequence>
<evidence type="ECO:0000255" key="1"/>
<evidence type="ECO:0000269" key="2">
    <source>
    </source>
</evidence>
<evidence type="ECO:0000303" key="3">
    <source>
    </source>
</evidence>
<evidence type="ECO:0000305" key="4"/>
<evidence type="ECO:0000305" key="5">
    <source>
    </source>
</evidence>
<evidence type="ECO:0007829" key="6">
    <source>
        <dbReference type="PDB" id="2LZO"/>
    </source>
</evidence>
<proteinExistence type="evidence at protein level"/>
<organism>
    <name type="scientific">Urticina grebelnyi</name>
    <name type="common">Painted anemone</name>
    <dbReference type="NCBI Taxonomy" id="1264739"/>
    <lineage>
        <taxon>Eukaryota</taxon>
        <taxon>Metazoa</taxon>
        <taxon>Cnidaria</taxon>
        <taxon>Anthozoa</taxon>
        <taxon>Hexacorallia</taxon>
        <taxon>Actiniaria</taxon>
        <taxon>Actiniidae</taxon>
        <taxon>Urticina</taxon>
    </lineage>
</organism>
<dbReference type="EMBL" id="HF562346">
    <property type="protein sequence ID" value="CCP19153.1"/>
    <property type="molecule type" value="mRNA"/>
</dbReference>
<dbReference type="PDB" id="2LZO">
    <property type="method" value="NMR"/>
    <property type="chains" value="A=132-160"/>
</dbReference>
<dbReference type="PDBsum" id="2LZO"/>
<dbReference type="SMR" id="R4ZCU1"/>
<dbReference type="TCDB" id="8.B.15.1.3">
    <property type="family name" value="the sea anemone peptide toxin class 4 (shtx) family"/>
</dbReference>
<dbReference type="EvolutionaryTrace" id="R4ZCU1"/>
<dbReference type="GO" id="GO:0005576">
    <property type="term" value="C:extracellular region"/>
    <property type="evidence" value="ECO:0007669"/>
    <property type="project" value="UniProtKB-SubCell"/>
</dbReference>
<dbReference type="GO" id="GO:0042151">
    <property type="term" value="C:nematocyst"/>
    <property type="evidence" value="ECO:0007669"/>
    <property type="project" value="UniProtKB-SubCell"/>
</dbReference>
<dbReference type="GO" id="GO:0099106">
    <property type="term" value="F:ion channel regulator activity"/>
    <property type="evidence" value="ECO:0007669"/>
    <property type="project" value="UniProtKB-KW"/>
</dbReference>
<dbReference type="GO" id="GO:0090729">
    <property type="term" value="F:toxin activity"/>
    <property type="evidence" value="ECO:0007669"/>
    <property type="project" value="UniProtKB-KW"/>
</dbReference>
<dbReference type="CDD" id="cd21873">
    <property type="entry name" value="Ugr_9a-1-like"/>
    <property type="match status" value="4"/>
</dbReference>
<keyword id="KW-0002">3D-structure</keyword>
<keyword id="KW-0165">Cleavage on pair of basic residues</keyword>
<keyword id="KW-0903">Direct protein sequencing</keyword>
<keyword id="KW-1015">Disulfide bond</keyword>
<keyword id="KW-0872">Ion channel impairing toxin</keyword>
<keyword id="KW-0166">Nematocyst</keyword>
<keyword id="KW-0528">Neurotoxin</keyword>
<keyword id="KW-1275">Proton-gated sodium channel impairing toxin</keyword>
<keyword id="KW-0964">Secreted</keyword>
<keyword id="KW-0732">Signal</keyword>
<keyword id="KW-0800">Toxin</keyword>
<protein>
    <recommendedName>
        <fullName evidence="3">Precursor protein UG</fullName>
    </recommendedName>
    <component>
        <recommendedName>
            <fullName evidence="4">U-actitoxin-Ugr1c</fullName>
            <shortName evidence="4">U-AITX-Ugr1c</shortName>
        </recommendedName>
        <alternativeName>
            <fullName evidence="3">AnmTX Ugr 9a-3</fullName>
            <shortName evidence="3">Ugr 9-3</shortName>
        </alternativeName>
    </component>
    <component>
        <recommendedName>
            <fullName evidence="4">U-actitoxin-Ugr1b</fullName>
            <shortName evidence="4">U-AITX-Ugr1b</shortName>
        </recommendedName>
        <alternativeName>
            <fullName evidence="3">AnmTX Ugr 9a-2</fullName>
            <shortName evidence="3">Ugr 9-2</shortName>
        </alternativeName>
    </component>
    <component>
        <recommendedName>
            <fullName evidence="4">Pi-actitoxin-Ugr1a</fullName>
            <shortName evidence="4">Pi-AITX-Ugr1a</shortName>
        </recommendedName>
        <alternativeName>
            <fullName evidence="3">Pi-AnmTX Ugr 9a-1</fullName>
            <shortName evidence="3">Ugr 9-1</shortName>
        </alternativeName>
    </component>
</protein>
<accession>R4ZCU1</accession>
<accession>S4S1V7</accession>
<feature type="signal peptide" evidence="1">
    <location>
        <begin position="1"/>
        <end position="19"/>
    </location>
</feature>
<feature type="chain" id="PRO_0000433732" description="Precursor protein UG">
    <location>
        <begin position="20"/>
        <end position="162"/>
    </location>
</feature>
<feature type="propeptide" id="PRO_0000433733" evidence="2">
    <location>
        <begin position="20"/>
        <end position="23"/>
    </location>
</feature>
<feature type="peptide" id="PRO_0000433734" description="U-actitoxin-Ugr1c">
    <location>
        <begin position="24"/>
        <end position="52"/>
    </location>
</feature>
<feature type="propeptide" id="PRO_0000433735" evidence="2">
    <location>
        <begin position="56"/>
        <end position="59"/>
    </location>
</feature>
<feature type="peptide" id="PRO_0000433736" description="U-actitoxin-Ugr1b">
    <location>
        <begin position="60"/>
        <end position="88"/>
    </location>
</feature>
<feature type="propeptide" id="PRO_0000433737" evidence="2">
    <location>
        <begin position="92"/>
        <end position="95"/>
    </location>
</feature>
<feature type="peptide" id="PRO_0000433738" description="U-actitoxin-Ugr1b">
    <location>
        <begin position="96"/>
        <end position="124"/>
    </location>
</feature>
<feature type="propeptide" id="PRO_0000433739" evidence="2">
    <location>
        <begin position="128"/>
        <end position="131"/>
    </location>
</feature>
<feature type="peptide" id="PRO_0000433740" description="Pi-actitoxin-Ugr1a">
    <location>
        <begin position="132"/>
        <end position="160"/>
    </location>
</feature>
<feature type="disulfide bond" evidence="5">
    <location>
        <begin position="30"/>
        <end position="42"/>
    </location>
</feature>
<feature type="disulfide bond" evidence="5">
    <location>
        <begin position="33"/>
        <end position="49"/>
    </location>
</feature>
<feature type="disulfide bond" evidence="5">
    <location>
        <begin position="66"/>
        <end position="78"/>
    </location>
</feature>
<feature type="disulfide bond" evidence="5">
    <location>
        <begin position="69"/>
        <end position="85"/>
    </location>
</feature>
<feature type="disulfide bond" evidence="5">
    <location>
        <begin position="102"/>
        <end position="114"/>
    </location>
</feature>
<feature type="disulfide bond" evidence="5">
    <location>
        <begin position="105"/>
        <end position="121"/>
    </location>
</feature>
<feature type="disulfide bond" evidence="2">
    <location>
        <begin position="138"/>
        <end position="150"/>
    </location>
</feature>
<feature type="disulfide bond" evidence="2">
    <location>
        <begin position="141"/>
        <end position="157"/>
    </location>
</feature>
<feature type="strand" evidence="6">
    <location>
        <begin position="142"/>
        <end position="144"/>
    </location>
</feature>
<feature type="strand" evidence="6">
    <location>
        <begin position="150"/>
        <end position="152"/>
    </location>
</feature>
<comment type="function">
    <molecule>Pi-actitoxin-Ugr1a</molecule>
    <text evidence="2">Affects the ASIC3 channel (ACCN3) and produces analgesic effects. It produces a reversible inhibition effect on both the transient and the sustained current of human ASIC3 channels expressed in X.laevis oocytes. It completely blocks the transient component (IC(50)=10 uM) and partially (48%) inhibits the amplitude of the sustained component (IC(50)=1.44 uM). Using in vivo tests in mice, it reverses inflammatory and acid-induced pain.</text>
</comment>
<comment type="function">
    <molecule>U-actitoxin-Ugr1b</molecule>
    <text evidence="2">Does not affect the ASIC3 channel. Does not cause lethality or paralysis of noble crayfish (A.astacus) at a dose of 1 mg/kg.</text>
</comment>
<comment type="function">
    <molecule>U-actitoxin-Ugr1c</molecule>
    <text evidence="2">Does not affect the ASIC3 channel. Does not cause lethality or paralysis of noble crayfish (A.astacus) at a dose of 1 mg/kg.</text>
</comment>
<comment type="subcellular location">
    <subcellularLocation>
        <location evidence="2">Secreted</location>
    </subcellularLocation>
    <subcellularLocation>
        <location evidence="2">Nematocyst</location>
    </subcellularLocation>
</comment>
<comment type="domain">
    <text evidence="5">Pi-AnmTX Ugr 9a-1, AnmTX Ugr 9a-2 and AnmTX Ugr 9a-3 have a structural fold called the boundless beta-hairpin since its beta-hairpin is not stabilized by disulfide bonds.</text>
</comment>
<comment type="mass spectrometry" mass="3053.0" method="MALDI" evidence="2">
    <molecule>U-actitoxin-Ugr1c</molecule>
    <text>Average mass.</text>
</comment>
<comment type="mass spectrometry" mass="3087.0" method="MALDI" evidence="2">
    <molecule>U-actitoxin-Ugr1b</molecule>
    <text>Average mass.</text>
</comment>
<comment type="mass spectrometry" mass="3135.5" method="MALDI" evidence="2">
    <molecule>Pi-actitoxin-Ugr1a</molecule>
    <text>Average mass.</text>
</comment>
<comment type="miscellaneous">
    <molecule>Pi-actitoxin-Ugr1a</molecule>
    <text evidence="2">Negative results: shows neither agonistic nor antagonistic activity on ASIC1a/ASIC1, ASIC1b/ASIC1 and ASIC2a/ASIC2 at concentrations up to 50 uM as well as on the hKv1.3/KCNA3 channel at concentrations up to 1 uM. It does not cause lethality or paralysis of noble crayfish (A.astacus) at a dose of 1 mg/kg.</text>
</comment>
<comment type="similarity">
    <text evidence="5">Belongs to the sea anemone BBH family.</text>
</comment>
<name>BBHUG_URTGR</name>